<dbReference type="EMBL" id="BX950851">
    <property type="protein sequence ID" value="CAG73266.1"/>
    <property type="molecule type" value="Genomic_DNA"/>
</dbReference>
<dbReference type="RefSeq" id="WP_011091977.1">
    <property type="nucleotide sequence ID" value="NC_004547.2"/>
</dbReference>
<dbReference type="SMR" id="Q6DAA8"/>
<dbReference type="STRING" id="218491.ECA0347"/>
<dbReference type="KEGG" id="eca:ECA0347"/>
<dbReference type="PATRIC" id="fig|218491.5.peg.348"/>
<dbReference type="eggNOG" id="COG2132">
    <property type="taxonomic scope" value="Bacteria"/>
</dbReference>
<dbReference type="HOGENOM" id="CLU_009100_2_4_6"/>
<dbReference type="OrthoDB" id="9757546at2"/>
<dbReference type="Proteomes" id="UP000007966">
    <property type="component" value="Chromosome"/>
</dbReference>
<dbReference type="GO" id="GO:0032153">
    <property type="term" value="C:cell division site"/>
    <property type="evidence" value="ECO:0007669"/>
    <property type="project" value="UniProtKB-UniRule"/>
</dbReference>
<dbReference type="GO" id="GO:0030288">
    <property type="term" value="C:outer membrane-bounded periplasmic space"/>
    <property type="evidence" value="ECO:0007669"/>
    <property type="project" value="UniProtKB-UniRule"/>
</dbReference>
<dbReference type="GO" id="GO:0005507">
    <property type="term" value="F:copper ion binding"/>
    <property type="evidence" value="ECO:0007669"/>
    <property type="project" value="InterPro"/>
</dbReference>
<dbReference type="GO" id="GO:0016491">
    <property type="term" value="F:oxidoreductase activity"/>
    <property type="evidence" value="ECO:0007669"/>
    <property type="project" value="InterPro"/>
</dbReference>
<dbReference type="GO" id="GO:0043093">
    <property type="term" value="P:FtsZ-dependent cytokinesis"/>
    <property type="evidence" value="ECO:0007669"/>
    <property type="project" value="UniProtKB-UniRule"/>
</dbReference>
<dbReference type="CDD" id="cd13867">
    <property type="entry name" value="CuRO_2_CueO_FtsP"/>
    <property type="match status" value="1"/>
</dbReference>
<dbReference type="Gene3D" id="2.60.40.420">
    <property type="entry name" value="Cupredoxins - blue copper proteins"/>
    <property type="match status" value="3"/>
</dbReference>
<dbReference type="HAMAP" id="MF_00915">
    <property type="entry name" value="FtsP"/>
    <property type="match status" value="1"/>
</dbReference>
<dbReference type="InterPro" id="IPR011707">
    <property type="entry name" value="Cu-oxidase-like_N"/>
</dbReference>
<dbReference type="InterPro" id="IPR011706">
    <property type="entry name" value="Cu-oxidase_C"/>
</dbReference>
<dbReference type="InterPro" id="IPR045087">
    <property type="entry name" value="Cu-oxidase_fam"/>
</dbReference>
<dbReference type="InterPro" id="IPR008972">
    <property type="entry name" value="Cupredoxin"/>
</dbReference>
<dbReference type="InterPro" id="IPR026589">
    <property type="entry name" value="FtsP"/>
</dbReference>
<dbReference type="InterPro" id="IPR006311">
    <property type="entry name" value="TAT_signal"/>
</dbReference>
<dbReference type="NCBIfam" id="NF008135">
    <property type="entry name" value="PRK10883.1"/>
    <property type="match status" value="1"/>
</dbReference>
<dbReference type="PANTHER" id="PTHR48267:SF1">
    <property type="entry name" value="BILIRUBIN OXIDASE"/>
    <property type="match status" value="1"/>
</dbReference>
<dbReference type="PANTHER" id="PTHR48267">
    <property type="entry name" value="CUPREDOXIN SUPERFAMILY PROTEIN"/>
    <property type="match status" value="1"/>
</dbReference>
<dbReference type="Pfam" id="PF07731">
    <property type="entry name" value="Cu-oxidase_2"/>
    <property type="match status" value="1"/>
</dbReference>
<dbReference type="Pfam" id="PF07732">
    <property type="entry name" value="Cu-oxidase_3"/>
    <property type="match status" value="1"/>
</dbReference>
<dbReference type="SUPFAM" id="SSF49503">
    <property type="entry name" value="Cupredoxins"/>
    <property type="match status" value="3"/>
</dbReference>
<dbReference type="PROSITE" id="PS51318">
    <property type="entry name" value="TAT"/>
    <property type="match status" value="1"/>
</dbReference>
<proteinExistence type="inferred from homology"/>
<comment type="function">
    <text evidence="1">Cell division protein that is required for growth during stress conditions. May be involved in protecting or stabilizing the divisomal assembly under conditions of stress.</text>
</comment>
<comment type="subcellular location">
    <subcellularLocation>
        <location evidence="1">Periplasm</location>
    </subcellularLocation>
    <text evidence="1">Localizes to the division septum.</text>
</comment>
<comment type="PTM">
    <text>Predicted to be exported by the Tat system. The position of the signal peptide cleavage has not been experimentally proven.</text>
</comment>
<comment type="similarity">
    <text evidence="1">Belongs to the FtsP family.</text>
</comment>
<gene>
    <name evidence="1" type="primary">ftsP</name>
    <name type="ordered locus">ECA0347</name>
</gene>
<accession>Q6DAA8</accession>
<keyword id="KW-0131">Cell cycle</keyword>
<keyword id="KW-0132">Cell division</keyword>
<keyword id="KW-0574">Periplasm</keyword>
<keyword id="KW-1185">Reference proteome</keyword>
<keyword id="KW-0732">Signal</keyword>
<protein>
    <recommendedName>
        <fullName evidence="1">Cell division protein FtsP</fullName>
    </recommendedName>
</protein>
<organism>
    <name type="scientific">Pectobacterium atrosepticum (strain SCRI 1043 / ATCC BAA-672)</name>
    <name type="common">Erwinia carotovora subsp. atroseptica</name>
    <dbReference type="NCBI Taxonomy" id="218491"/>
    <lineage>
        <taxon>Bacteria</taxon>
        <taxon>Pseudomonadati</taxon>
        <taxon>Pseudomonadota</taxon>
        <taxon>Gammaproteobacteria</taxon>
        <taxon>Enterobacterales</taxon>
        <taxon>Pectobacteriaceae</taxon>
        <taxon>Pectobacterium</taxon>
    </lineage>
</organism>
<sequence>MSLNRRQFIQASGLALCAGMTPLAAKASGNPAALPIPPLLESRRGQPLFLTMQRAHWAFSGDRKTSIWGINGRYLGPTVRVYDGDDVKLIYSNRLNEPVAMTIGGLQVPGPLMGGAARIISPGGDWSPVLPIRQSSATCWYHANTPNRMAPHIYNGLVGLWLVEDSTSKSLPLPNHYGVDDFPLIIQDKRLDNFGVPLYNPPSSGGFVGDSLLVNGVQSPFVEVSRGWVRLRLLNASNSRRYVMRLSDGRAMNVIASDQGLLPAPMAVNQLSLAPGERREILIDMSQGEEVTLTAGESAGIMDRLRGLFEPSSILISTQILTLKPTGLLPLVTDNLPMRLLADNIIEGSISRTREFRLGDSLPGINGAMWDMTRADVQTQLGRCERWIIHADTPQAFHIQGVKFLVRSANGRPPAVEDSGWKDTVWIDNDVELLVYFMQPSSMAFPFLYYSQTLELADRGSTGQLIVQSAM</sequence>
<evidence type="ECO:0000255" key="1">
    <source>
        <dbReference type="HAMAP-Rule" id="MF_00915"/>
    </source>
</evidence>
<reference key="1">
    <citation type="journal article" date="2004" name="Proc. Natl. Acad. Sci. U.S.A.">
        <title>Genome sequence of the enterobacterial phytopathogen Erwinia carotovora subsp. atroseptica and characterization of virulence factors.</title>
        <authorList>
            <person name="Bell K.S."/>
            <person name="Sebaihia M."/>
            <person name="Pritchard L."/>
            <person name="Holden M.T.G."/>
            <person name="Hyman L.J."/>
            <person name="Holeva M.C."/>
            <person name="Thomson N.R."/>
            <person name="Bentley S.D."/>
            <person name="Churcher L.J.C."/>
            <person name="Mungall K."/>
            <person name="Atkin R."/>
            <person name="Bason N."/>
            <person name="Brooks K."/>
            <person name="Chillingworth T."/>
            <person name="Clark K."/>
            <person name="Doggett J."/>
            <person name="Fraser A."/>
            <person name="Hance Z."/>
            <person name="Hauser H."/>
            <person name="Jagels K."/>
            <person name="Moule S."/>
            <person name="Norbertczak H."/>
            <person name="Ormond D."/>
            <person name="Price C."/>
            <person name="Quail M.A."/>
            <person name="Sanders M."/>
            <person name="Walker D."/>
            <person name="Whitehead S."/>
            <person name="Salmond G.P.C."/>
            <person name="Birch P.R.J."/>
            <person name="Parkhill J."/>
            <person name="Toth I.K."/>
        </authorList>
    </citation>
    <scope>NUCLEOTIDE SEQUENCE [LARGE SCALE GENOMIC DNA]</scope>
    <source>
        <strain>SCRI 1043 / ATCC BAA-672</strain>
    </source>
</reference>
<name>FTSP_PECAS</name>
<feature type="signal peptide" description="Tat-type signal" evidence="1">
    <location>
        <begin position="1"/>
        <end position="27"/>
    </location>
</feature>
<feature type="chain" id="PRO_0000416007" description="Cell division protein FtsP">
    <location>
        <begin position="28"/>
        <end position="471"/>
    </location>
</feature>
<feature type="domain" description="Plastocyanin-like" evidence="1">
    <location>
        <begin position="229"/>
        <end position="287"/>
    </location>
</feature>